<comment type="catalytic activity">
    <reaction evidence="1">
        <text>D-altronate + NAD(+) = keto-D-tagaturonate + NADH + H(+)</text>
        <dbReference type="Rhea" id="RHEA:17813"/>
        <dbReference type="ChEBI" id="CHEBI:15378"/>
        <dbReference type="ChEBI" id="CHEBI:17360"/>
        <dbReference type="ChEBI" id="CHEBI:17886"/>
        <dbReference type="ChEBI" id="CHEBI:57540"/>
        <dbReference type="ChEBI" id="CHEBI:57945"/>
        <dbReference type="EC" id="1.1.1.58"/>
    </reaction>
</comment>
<comment type="pathway">
    <text evidence="1">Carbohydrate metabolism; pentose and glucuronate interconversion.</text>
</comment>
<comment type="similarity">
    <text evidence="1">Belongs to the mannitol dehydrogenase family. UxaB subfamily.</text>
</comment>
<keyword id="KW-0520">NAD</keyword>
<keyword id="KW-0560">Oxidoreductase</keyword>
<gene>
    <name evidence="1" type="primary">uxaB</name>
    <name type="ordered locus">SFV_1580</name>
</gene>
<feature type="chain" id="PRO_1000044707" description="Altronate oxidoreductase">
    <location>
        <begin position="1"/>
        <end position="483"/>
    </location>
</feature>
<feature type="binding site" evidence="1">
    <location>
        <begin position="18"/>
        <end position="29"/>
    </location>
    <ligand>
        <name>NAD(+)</name>
        <dbReference type="ChEBI" id="CHEBI:57540"/>
    </ligand>
</feature>
<evidence type="ECO:0000255" key="1">
    <source>
        <dbReference type="HAMAP-Rule" id="MF_00670"/>
    </source>
</evidence>
<proteinExistence type="inferred from homology"/>
<reference key="1">
    <citation type="journal article" date="2006" name="BMC Genomics">
        <title>Complete genome sequence of Shigella flexneri 5b and comparison with Shigella flexneri 2a.</title>
        <authorList>
            <person name="Nie H."/>
            <person name="Yang F."/>
            <person name="Zhang X."/>
            <person name="Yang J."/>
            <person name="Chen L."/>
            <person name="Wang J."/>
            <person name="Xiong Z."/>
            <person name="Peng J."/>
            <person name="Sun L."/>
            <person name="Dong J."/>
            <person name="Xue Y."/>
            <person name="Xu X."/>
            <person name="Chen S."/>
            <person name="Yao Z."/>
            <person name="Shen Y."/>
            <person name="Jin Q."/>
        </authorList>
    </citation>
    <scope>NUCLEOTIDE SEQUENCE [LARGE SCALE GENOMIC DNA]</scope>
    <source>
        <strain>8401</strain>
    </source>
</reference>
<accession>Q0T4K8</accession>
<dbReference type="EC" id="1.1.1.58" evidence="1"/>
<dbReference type="EMBL" id="CP000266">
    <property type="protein sequence ID" value="ABF03757.1"/>
    <property type="molecule type" value="Genomic_DNA"/>
</dbReference>
<dbReference type="RefSeq" id="WP_000854635.1">
    <property type="nucleotide sequence ID" value="NC_008258.1"/>
</dbReference>
<dbReference type="SMR" id="Q0T4K8"/>
<dbReference type="KEGG" id="sfv:SFV_1580"/>
<dbReference type="HOGENOM" id="CLU_027324_1_0_6"/>
<dbReference type="UniPathway" id="UPA00246"/>
<dbReference type="Proteomes" id="UP000000659">
    <property type="component" value="Chromosome"/>
</dbReference>
<dbReference type="GO" id="GO:0005829">
    <property type="term" value="C:cytosol"/>
    <property type="evidence" value="ECO:0007669"/>
    <property type="project" value="TreeGrafter"/>
</dbReference>
<dbReference type="GO" id="GO:0008926">
    <property type="term" value="F:mannitol-1-phosphate 5-dehydrogenase activity"/>
    <property type="evidence" value="ECO:0007669"/>
    <property type="project" value="TreeGrafter"/>
</dbReference>
<dbReference type="GO" id="GO:0009026">
    <property type="term" value="F:tagaturonate reductase activity"/>
    <property type="evidence" value="ECO:0007669"/>
    <property type="project" value="UniProtKB-UniRule"/>
</dbReference>
<dbReference type="GO" id="GO:0019698">
    <property type="term" value="P:D-galacturonate catabolic process"/>
    <property type="evidence" value="ECO:0007669"/>
    <property type="project" value="TreeGrafter"/>
</dbReference>
<dbReference type="GO" id="GO:0019592">
    <property type="term" value="P:mannitol catabolic process"/>
    <property type="evidence" value="ECO:0007669"/>
    <property type="project" value="TreeGrafter"/>
</dbReference>
<dbReference type="FunFam" id="1.10.1040.10:FF:000018">
    <property type="entry name" value="Altronate oxidoreductase"/>
    <property type="match status" value="1"/>
</dbReference>
<dbReference type="FunFam" id="3.40.50.720:FF:000153">
    <property type="entry name" value="Altronate oxidoreductase"/>
    <property type="match status" value="1"/>
</dbReference>
<dbReference type="Gene3D" id="1.10.1040.10">
    <property type="entry name" value="N-(1-d-carboxylethyl)-l-norvaline Dehydrogenase, domain 2"/>
    <property type="match status" value="1"/>
</dbReference>
<dbReference type="Gene3D" id="3.40.50.720">
    <property type="entry name" value="NAD(P)-binding Rossmann-like Domain"/>
    <property type="match status" value="1"/>
</dbReference>
<dbReference type="HAMAP" id="MF_00670">
    <property type="entry name" value="Altron_oxidoreduct"/>
    <property type="match status" value="1"/>
</dbReference>
<dbReference type="InterPro" id="IPR008927">
    <property type="entry name" value="6-PGluconate_DH-like_C_sf"/>
</dbReference>
<dbReference type="InterPro" id="IPR013328">
    <property type="entry name" value="6PGD_dom2"/>
</dbReference>
<dbReference type="InterPro" id="IPR023668">
    <property type="entry name" value="Altronate_OxRdtase"/>
</dbReference>
<dbReference type="InterPro" id="IPR013118">
    <property type="entry name" value="Mannitol_DH_C"/>
</dbReference>
<dbReference type="InterPro" id="IPR013131">
    <property type="entry name" value="Mannitol_DH_N"/>
</dbReference>
<dbReference type="InterPro" id="IPR036291">
    <property type="entry name" value="NAD(P)-bd_dom_sf"/>
</dbReference>
<dbReference type="NCBIfam" id="NF002969">
    <property type="entry name" value="PRK03643.1"/>
    <property type="match status" value="1"/>
</dbReference>
<dbReference type="PANTHER" id="PTHR30524:SF0">
    <property type="entry name" value="ALTRONATE OXIDOREDUCTASE-RELATED"/>
    <property type="match status" value="1"/>
</dbReference>
<dbReference type="PANTHER" id="PTHR30524">
    <property type="entry name" value="MANNITOL-1-PHOSPHATE 5-DEHYDROGENASE"/>
    <property type="match status" value="1"/>
</dbReference>
<dbReference type="Pfam" id="PF01232">
    <property type="entry name" value="Mannitol_dh"/>
    <property type="match status" value="1"/>
</dbReference>
<dbReference type="Pfam" id="PF08125">
    <property type="entry name" value="Mannitol_dh_C"/>
    <property type="match status" value="1"/>
</dbReference>
<dbReference type="SUPFAM" id="SSF48179">
    <property type="entry name" value="6-phosphogluconate dehydrogenase C-terminal domain-like"/>
    <property type="match status" value="1"/>
</dbReference>
<dbReference type="SUPFAM" id="SSF51735">
    <property type="entry name" value="NAD(P)-binding Rossmann-fold domains"/>
    <property type="match status" value="1"/>
</dbReference>
<protein>
    <recommendedName>
        <fullName evidence="1">Altronate oxidoreductase</fullName>
        <ecNumber evidence="1">1.1.1.58</ecNumber>
    </recommendedName>
    <alternativeName>
        <fullName evidence="1">Tagaturonate dehydrogenase</fullName>
    </alternativeName>
    <alternativeName>
        <fullName evidence="1">Tagaturonate reductase</fullName>
    </alternativeName>
</protein>
<organism>
    <name type="scientific">Shigella flexneri serotype 5b (strain 8401)</name>
    <dbReference type="NCBI Taxonomy" id="373384"/>
    <lineage>
        <taxon>Bacteria</taxon>
        <taxon>Pseudomonadati</taxon>
        <taxon>Pseudomonadota</taxon>
        <taxon>Gammaproteobacteria</taxon>
        <taxon>Enterobacterales</taxon>
        <taxon>Enterobacteriaceae</taxon>
        <taxon>Shigella</taxon>
    </lineage>
</organism>
<name>UXAB_SHIF8</name>
<sequence>MKTLNRRDFPGAQYPERIIQFGEGNFLRAFVDWQIDLLNEHTDLNSGVVVVRPIETSFPPSLSTQDGLYTTIIRGLNEKGEAVSDARLIRSVNREISVYSEYDEFLKLAHNPEMRFVFSNTTEAGISYHAGDKFDDAPAVSYPAKLTRLLFERFSHFNGALDKGWIIIPCELIDYNGDALRELVLRYAQEWALPEAFIQWLDQANSFCSTLVDRIVTGYPRDEVAKLEEELGYHDGFLDTAEHFYLFVIQGPKSLATELRLDKYPLNVLIVDDIKPYKERKVAILNGAHTALVPVAFQAGLDTVGEAMNDAEICAFVEKAIYEEIIPVLDLPRDELESFASAVTGRFRNPYIKHQLLSIALNGMTKFRTRILPQLLAGQKANGTLPARLTFALAALIAFYRGERNGETYPVQDDAHWLERYQQLWSQHRDRVIGTQELVAIVLAEKYHWEQDLTQVPGLVEQVANDLDAILEKGMREAVRPLC</sequence>